<proteinExistence type="inferred from homology"/>
<accession>C5P4Z8</accession>
<protein>
    <recommendedName>
        <fullName>Subtilisin-like protease CPC735_031240</fullName>
        <ecNumber>3.4.21.-</ecNumber>
    </recommendedName>
</protein>
<feature type="signal peptide" evidence="2">
    <location>
        <begin position="1"/>
        <end position="16"/>
    </location>
</feature>
<feature type="propeptide" id="PRO_0000407026" evidence="1">
    <location>
        <begin position="17"/>
        <end position="136"/>
    </location>
</feature>
<feature type="chain" id="PRO_0000407027" description="Subtilisin-like protease CPC735_031240">
    <location>
        <begin position="137"/>
        <end position="497"/>
    </location>
</feature>
<feature type="domain" description="Inhibitor I9" evidence="2">
    <location>
        <begin position="43"/>
        <end position="134"/>
    </location>
</feature>
<feature type="domain" description="Peptidase S8" evidence="3">
    <location>
        <begin position="146"/>
        <end position="452"/>
    </location>
</feature>
<feature type="active site" description="Charge relay system" evidence="3">
    <location>
        <position position="182"/>
    </location>
</feature>
<feature type="active site" description="Charge relay system" evidence="3">
    <location>
        <position position="214"/>
    </location>
</feature>
<feature type="active site" description="Charge relay system" evidence="3">
    <location>
        <position position="380"/>
    </location>
</feature>
<feature type="glycosylation site" description="N-linked (GlcNAc...) asparagine" evidence="2">
    <location>
        <position position="244"/>
    </location>
</feature>
<feature type="glycosylation site" description="N-linked (GlcNAc...) asparagine" evidence="2">
    <location>
        <position position="284"/>
    </location>
</feature>
<feature type="glycosylation site" description="N-linked (GlcNAc...) asparagine" evidence="2">
    <location>
        <position position="447"/>
    </location>
</feature>
<comment type="function">
    <text evidence="1">Secreted subtilisin-like serine protease with keratinolytic activity that contributes to pathogenicity.</text>
</comment>
<comment type="subcellular location">
    <subcellularLocation>
        <location evidence="1">Secreted</location>
    </subcellularLocation>
</comment>
<comment type="similarity">
    <text evidence="4">Belongs to the peptidase S8 family.</text>
</comment>
<keyword id="KW-0325">Glycoprotein</keyword>
<keyword id="KW-0378">Hydrolase</keyword>
<keyword id="KW-0645">Protease</keyword>
<keyword id="KW-0964">Secreted</keyword>
<keyword id="KW-0720">Serine protease</keyword>
<keyword id="KW-0732">Signal</keyword>
<keyword id="KW-0843">Virulence</keyword>
<keyword id="KW-0865">Zymogen</keyword>
<evidence type="ECO:0000250" key="1"/>
<evidence type="ECO:0000255" key="2"/>
<evidence type="ECO:0000255" key="3">
    <source>
        <dbReference type="PROSITE-ProRule" id="PRU01240"/>
    </source>
</evidence>
<evidence type="ECO:0000305" key="4"/>
<dbReference type="EC" id="3.4.21.-"/>
<dbReference type="EMBL" id="ACFW01000025">
    <property type="protein sequence ID" value="EER27788.1"/>
    <property type="molecule type" value="Genomic_DNA"/>
</dbReference>
<dbReference type="SMR" id="C5P4Z8"/>
<dbReference type="KEGG" id="cpw:9695428"/>
<dbReference type="VEuPathDB" id="FungiDB:CPC735_031240"/>
<dbReference type="HOGENOM" id="CLU_011263_1_4_1"/>
<dbReference type="OrthoDB" id="206201at2759"/>
<dbReference type="Proteomes" id="UP000009084">
    <property type="component" value="Unassembled WGS sequence"/>
</dbReference>
<dbReference type="GO" id="GO:0005576">
    <property type="term" value="C:extracellular region"/>
    <property type="evidence" value="ECO:0007669"/>
    <property type="project" value="UniProtKB-SubCell"/>
</dbReference>
<dbReference type="GO" id="GO:0004252">
    <property type="term" value="F:serine-type endopeptidase activity"/>
    <property type="evidence" value="ECO:0007669"/>
    <property type="project" value="InterPro"/>
</dbReference>
<dbReference type="GO" id="GO:0006508">
    <property type="term" value="P:proteolysis"/>
    <property type="evidence" value="ECO:0007669"/>
    <property type="project" value="UniProtKB-KW"/>
</dbReference>
<dbReference type="CDD" id="cd04077">
    <property type="entry name" value="Peptidases_S8_PCSK9_ProteinaseK_like"/>
    <property type="match status" value="1"/>
</dbReference>
<dbReference type="FunFam" id="3.30.70.80:FF:000006">
    <property type="entry name" value="Autophagic serine protease Alp2"/>
    <property type="match status" value="1"/>
</dbReference>
<dbReference type="FunFam" id="3.40.50.200:FF:000007">
    <property type="entry name" value="Subtilisin-like serine protease"/>
    <property type="match status" value="1"/>
</dbReference>
<dbReference type="Gene3D" id="3.30.70.80">
    <property type="entry name" value="Peptidase S8 propeptide/proteinase inhibitor I9"/>
    <property type="match status" value="1"/>
</dbReference>
<dbReference type="Gene3D" id="3.40.50.200">
    <property type="entry name" value="Peptidase S8/S53 domain"/>
    <property type="match status" value="1"/>
</dbReference>
<dbReference type="InterPro" id="IPR034193">
    <property type="entry name" value="PCSK9_ProteinaseK-like"/>
</dbReference>
<dbReference type="InterPro" id="IPR000209">
    <property type="entry name" value="Peptidase_S8/S53_dom"/>
</dbReference>
<dbReference type="InterPro" id="IPR036852">
    <property type="entry name" value="Peptidase_S8/S53_dom_sf"/>
</dbReference>
<dbReference type="InterPro" id="IPR022398">
    <property type="entry name" value="Peptidase_S8_His-AS"/>
</dbReference>
<dbReference type="InterPro" id="IPR023828">
    <property type="entry name" value="Peptidase_S8_Ser-AS"/>
</dbReference>
<dbReference type="InterPro" id="IPR050131">
    <property type="entry name" value="Peptidase_S8_subtilisin-like"/>
</dbReference>
<dbReference type="InterPro" id="IPR015500">
    <property type="entry name" value="Peptidase_S8_subtilisin-rel"/>
</dbReference>
<dbReference type="InterPro" id="IPR010259">
    <property type="entry name" value="S8pro/Inhibitor_I9"/>
</dbReference>
<dbReference type="InterPro" id="IPR037045">
    <property type="entry name" value="S8pro/Inhibitor_I9_sf"/>
</dbReference>
<dbReference type="PANTHER" id="PTHR43806:SF11">
    <property type="entry name" value="CEREVISIN-RELATED"/>
    <property type="match status" value="1"/>
</dbReference>
<dbReference type="PANTHER" id="PTHR43806">
    <property type="entry name" value="PEPTIDASE S8"/>
    <property type="match status" value="1"/>
</dbReference>
<dbReference type="Pfam" id="PF05922">
    <property type="entry name" value="Inhibitor_I9"/>
    <property type="match status" value="1"/>
</dbReference>
<dbReference type="Pfam" id="PF00082">
    <property type="entry name" value="Peptidase_S8"/>
    <property type="match status" value="1"/>
</dbReference>
<dbReference type="PRINTS" id="PR00723">
    <property type="entry name" value="SUBTILISIN"/>
</dbReference>
<dbReference type="SUPFAM" id="SSF52743">
    <property type="entry name" value="Subtilisin-like"/>
    <property type="match status" value="1"/>
</dbReference>
<dbReference type="PROSITE" id="PS51892">
    <property type="entry name" value="SUBTILASE"/>
    <property type="match status" value="1"/>
</dbReference>
<dbReference type="PROSITE" id="PS00137">
    <property type="entry name" value="SUBTILASE_HIS"/>
    <property type="match status" value="1"/>
</dbReference>
<dbReference type="PROSITE" id="PS00138">
    <property type="entry name" value="SUBTILASE_SER"/>
    <property type="match status" value="1"/>
</dbReference>
<organism>
    <name type="scientific">Coccidioides posadasii (strain C735)</name>
    <name type="common">Valley fever fungus</name>
    <dbReference type="NCBI Taxonomy" id="222929"/>
    <lineage>
        <taxon>Eukaryota</taxon>
        <taxon>Fungi</taxon>
        <taxon>Dikarya</taxon>
        <taxon>Ascomycota</taxon>
        <taxon>Pezizomycotina</taxon>
        <taxon>Eurotiomycetes</taxon>
        <taxon>Eurotiomycetidae</taxon>
        <taxon>Onygenales</taxon>
        <taxon>Onygenaceae</taxon>
        <taxon>Coccidioides</taxon>
    </lineage>
</organism>
<name>SUB8_COCP7</name>
<reference key="1">
    <citation type="journal article" date="2009" name="Genome Res.">
        <title>Comparative genomic analyses of the human fungal pathogens Coccidioides and their relatives.</title>
        <authorList>
            <person name="Sharpton T.J."/>
            <person name="Stajich J.E."/>
            <person name="Rounsley S.D."/>
            <person name="Gardner M.J."/>
            <person name="Wortman J.R."/>
            <person name="Jordar V.S."/>
            <person name="Maiti R."/>
            <person name="Kodira C.D."/>
            <person name="Neafsey D.E."/>
            <person name="Zeng Q."/>
            <person name="Hung C.-Y."/>
            <person name="McMahan C."/>
            <person name="Muszewska A."/>
            <person name="Grynberg M."/>
            <person name="Mandel M.A."/>
            <person name="Kellner E.M."/>
            <person name="Barker B.M."/>
            <person name="Galgiani J.N."/>
            <person name="Orbach M.J."/>
            <person name="Kirkland T.N."/>
            <person name="Cole G.T."/>
            <person name="Henn M.R."/>
            <person name="Birren B.W."/>
            <person name="Taylor J.W."/>
        </authorList>
    </citation>
    <scope>NUCLEOTIDE SEQUENCE [LARGE SCALE GENOMIC DNA]</scope>
    <source>
        <strain>C735</strain>
    </source>
</reference>
<gene>
    <name type="ORF">CPC735_031240</name>
</gene>
<sequence>MKGVLSLSLLPLLAAPSPILVDTIHRDAAPILSSHNSKEVPDSYIVVFKKNVSPASAAAHQVWVQDLHTTVMAKRSLRKRNQFPFKNDAFDGLKHTYDIAGSIMGYSGHFDEEVIEQVRRHPDVQYIEKDSEVHAWDEPVTENNAPWGLARVSHRDSLTMGTFNKYLYAANGGEGVDVYVIDTGTNIEHVDFEGRAHWGKTIPTGDDDVDGNGHGTHCSGTVAGKKYGVAKKANVYAVKVLRSNGSGTMSDVVKGVEWAAGAHLSKMVEARKKGNKAFKGSAANMSLGGGKSFTLDLAVNAAVDAGIHFAVAAGNDNADACNYSPAAAEKAVTVGASTLADERAYFSNYGKCTDIFAPGLNILSTWIGSKYAVNTISGTSMASPHVAGLLAYFLSLQPEQDSAFAVSPISPAKLKKDMIAIATKNALTDIPADTPNILAWNGGGSSNYTAIIQQGGYEATRPGNKAAQLTEKIEKLGQNTASQLGAIYSEIKDAFTI</sequence>